<organism>
    <name type="scientific">Escherichia coli (strain ATCC 8739 / DSM 1576 / NBRC 3972 / NCIMB 8545 / WDCM 00012 / Crooks)</name>
    <dbReference type="NCBI Taxonomy" id="481805"/>
    <lineage>
        <taxon>Bacteria</taxon>
        <taxon>Pseudomonadati</taxon>
        <taxon>Pseudomonadota</taxon>
        <taxon>Gammaproteobacteria</taxon>
        <taxon>Enterobacterales</taxon>
        <taxon>Enterobacteriaceae</taxon>
        <taxon>Escherichia</taxon>
    </lineage>
</organism>
<proteinExistence type="inferred from homology"/>
<reference key="1">
    <citation type="submission" date="2008-02" db="EMBL/GenBank/DDBJ databases">
        <title>Complete sequence of Escherichia coli C str. ATCC 8739.</title>
        <authorList>
            <person name="Copeland A."/>
            <person name="Lucas S."/>
            <person name="Lapidus A."/>
            <person name="Glavina del Rio T."/>
            <person name="Dalin E."/>
            <person name="Tice H."/>
            <person name="Bruce D."/>
            <person name="Goodwin L."/>
            <person name="Pitluck S."/>
            <person name="Kiss H."/>
            <person name="Brettin T."/>
            <person name="Detter J.C."/>
            <person name="Han C."/>
            <person name="Kuske C.R."/>
            <person name="Schmutz J."/>
            <person name="Larimer F."/>
            <person name="Land M."/>
            <person name="Hauser L."/>
            <person name="Kyrpides N."/>
            <person name="Mikhailova N."/>
            <person name="Ingram L."/>
            <person name="Richardson P."/>
        </authorList>
    </citation>
    <scope>NUCLEOTIDE SEQUENCE [LARGE SCALE GENOMIC DNA]</scope>
    <source>
        <strain>ATCC 8739 / DSM 1576 / NBRC 3972 / NCIMB 8545 / WDCM 00012 / Crooks</strain>
    </source>
</reference>
<evidence type="ECO:0000255" key="1">
    <source>
        <dbReference type="HAMAP-Rule" id="MF_00303"/>
    </source>
</evidence>
<protein>
    <recommendedName>
        <fullName evidence="1">Trigger factor</fullName>
        <shortName evidence="1">TF</shortName>
        <ecNumber evidence="1">5.2.1.8</ecNumber>
    </recommendedName>
    <alternativeName>
        <fullName evidence="1">PPIase</fullName>
    </alternativeName>
</protein>
<name>TIG_ECOLC</name>
<sequence>MQVSVETTQGLGRRVTITIAADSIETAVKSELVNVAKKVRIDGFRKGKVPMNIVAQRYGASVRQDVLGDLMSRNFIDAIIKEKINPAGAPTYVPGEYKLGEDFTYSVEFEVYPEVELQGLEAIEVEKPIVEVTDADVDGMLDTLRKQQATWKEKDGAVEAEDRVTIDFTGSVDGEEFEGGKASDFVLAMGQGRMIPGFEDGIKGHKAGEEFTIDVTFPEEYHAENLKGKAAKFAINLKKVEERELPELTAEFIKRFGVEDGSVEGLRAEVRKNMERELKSAIRNRVKSQAIEGLVKANDIDVPAALIDSEIDVLRRQAAQRFGGNEKQALELPRELFEEQAKRRVVVGLLLGEVIRTNELKADEERVKGLIEEMASAYEDPKEVIEFYSKNKELMDNMRNVALEEQAVEAVLAKAKVTEKETTFNELMNQQA</sequence>
<dbReference type="EC" id="5.2.1.8" evidence="1"/>
<dbReference type="EMBL" id="CP000946">
    <property type="protein sequence ID" value="ACA78818.1"/>
    <property type="molecule type" value="Genomic_DNA"/>
</dbReference>
<dbReference type="RefSeq" id="WP_001198386.1">
    <property type="nucleotide sequence ID" value="NZ_MTFT01000010.1"/>
</dbReference>
<dbReference type="BMRB" id="B1J012"/>
<dbReference type="SMR" id="B1J012"/>
<dbReference type="GeneID" id="75202861"/>
<dbReference type="KEGG" id="ecl:EcolC_3196"/>
<dbReference type="HOGENOM" id="CLU_033058_2_0_6"/>
<dbReference type="GO" id="GO:0005737">
    <property type="term" value="C:cytoplasm"/>
    <property type="evidence" value="ECO:0007669"/>
    <property type="project" value="UniProtKB-SubCell"/>
</dbReference>
<dbReference type="GO" id="GO:0003755">
    <property type="term" value="F:peptidyl-prolyl cis-trans isomerase activity"/>
    <property type="evidence" value="ECO:0007669"/>
    <property type="project" value="UniProtKB-UniRule"/>
</dbReference>
<dbReference type="GO" id="GO:0044183">
    <property type="term" value="F:protein folding chaperone"/>
    <property type="evidence" value="ECO:0007669"/>
    <property type="project" value="TreeGrafter"/>
</dbReference>
<dbReference type="GO" id="GO:0043022">
    <property type="term" value="F:ribosome binding"/>
    <property type="evidence" value="ECO:0007669"/>
    <property type="project" value="TreeGrafter"/>
</dbReference>
<dbReference type="GO" id="GO:0051083">
    <property type="term" value="P:'de novo' cotranslational protein folding"/>
    <property type="evidence" value="ECO:0007669"/>
    <property type="project" value="TreeGrafter"/>
</dbReference>
<dbReference type="GO" id="GO:0051301">
    <property type="term" value="P:cell division"/>
    <property type="evidence" value="ECO:0007669"/>
    <property type="project" value="UniProtKB-KW"/>
</dbReference>
<dbReference type="GO" id="GO:0061077">
    <property type="term" value="P:chaperone-mediated protein folding"/>
    <property type="evidence" value="ECO:0007669"/>
    <property type="project" value="TreeGrafter"/>
</dbReference>
<dbReference type="GO" id="GO:0015031">
    <property type="term" value="P:protein transport"/>
    <property type="evidence" value="ECO:0007669"/>
    <property type="project" value="UniProtKB-UniRule"/>
</dbReference>
<dbReference type="GO" id="GO:0043335">
    <property type="term" value="P:protein unfolding"/>
    <property type="evidence" value="ECO:0007669"/>
    <property type="project" value="TreeGrafter"/>
</dbReference>
<dbReference type="FunFam" id="1.10.3120.10:FF:000001">
    <property type="entry name" value="Trigger factor"/>
    <property type="match status" value="1"/>
</dbReference>
<dbReference type="FunFam" id="3.10.50.40:FF:000001">
    <property type="entry name" value="Trigger factor"/>
    <property type="match status" value="1"/>
</dbReference>
<dbReference type="FunFam" id="3.30.70.1050:FF:000001">
    <property type="entry name" value="Trigger factor"/>
    <property type="match status" value="1"/>
</dbReference>
<dbReference type="Gene3D" id="3.10.50.40">
    <property type="match status" value="1"/>
</dbReference>
<dbReference type="Gene3D" id="3.30.70.1050">
    <property type="entry name" value="Trigger factor ribosome-binding domain"/>
    <property type="match status" value="1"/>
</dbReference>
<dbReference type="Gene3D" id="1.10.3120.10">
    <property type="entry name" value="Trigger factor, C-terminal domain"/>
    <property type="match status" value="1"/>
</dbReference>
<dbReference type="HAMAP" id="MF_00303">
    <property type="entry name" value="Trigger_factor_Tig"/>
    <property type="match status" value="1"/>
</dbReference>
<dbReference type="InterPro" id="IPR046357">
    <property type="entry name" value="PPIase_dom_sf"/>
</dbReference>
<dbReference type="InterPro" id="IPR001179">
    <property type="entry name" value="PPIase_FKBP_dom"/>
</dbReference>
<dbReference type="InterPro" id="IPR005215">
    <property type="entry name" value="Trig_fac"/>
</dbReference>
<dbReference type="InterPro" id="IPR008880">
    <property type="entry name" value="Trigger_fac_C"/>
</dbReference>
<dbReference type="InterPro" id="IPR037041">
    <property type="entry name" value="Trigger_fac_C_sf"/>
</dbReference>
<dbReference type="InterPro" id="IPR008881">
    <property type="entry name" value="Trigger_fac_ribosome-bd_bac"/>
</dbReference>
<dbReference type="InterPro" id="IPR036611">
    <property type="entry name" value="Trigger_fac_ribosome-bd_sf"/>
</dbReference>
<dbReference type="InterPro" id="IPR027304">
    <property type="entry name" value="Trigger_fact/SurA_dom_sf"/>
</dbReference>
<dbReference type="NCBIfam" id="TIGR00115">
    <property type="entry name" value="tig"/>
    <property type="match status" value="1"/>
</dbReference>
<dbReference type="PANTHER" id="PTHR30560">
    <property type="entry name" value="TRIGGER FACTOR CHAPERONE AND PEPTIDYL-PROLYL CIS/TRANS ISOMERASE"/>
    <property type="match status" value="1"/>
</dbReference>
<dbReference type="PANTHER" id="PTHR30560:SF3">
    <property type="entry name" value="TRIGGER FACTOR-LIKE PROTEIN TIG, CHLOROPLASTIC"/>
    <property type="match status" value="1"/>
</dbReference>
<dbReference type="Pfam" id="PF00254">
    <property type="entry name" value="FKBP_C"/>
    <property type="match status" value="1"/>
</dbReference>
<dbReference type="Pfam" id="PF05698">
    <property type="entry name" value="Trigger_C"/>
    <property type="match status" value="1"/>
</dbReference>
<dbReference type="Pfam" id="PF05697">
    <property type="entry name" value="Trigger_N"/>
    <property type="match status" value="1"/>
</dbReference>
<dbReference type="PIRSF" id="PIRSF003095">
    <property type="entry name" value="Trigger_factor"/>
    <property type="match status" value="1"/>
</dbReference>
<dbReference type="SUPFAM" id="SSF54534">
    <property type="entry name" value="FKBP-like"/>
    <property type="match status" value="1"/>
</dbReference>
<dbReference type="SUPFAM" id="SSF109998">
    <property type="entry name" value="Triger factor/SurA peptide-binding domain-like"/>
    <property type="match status" value="1"/>
</dbReference>
<dbReference type="SUPFAM" id="SSF102735">
    <property type="entry name" value="Trigger factor ribosome-binding domain"/>
    <property type="match status" value="1"/>
</dbReference>
<dbReference type="PROSITE" id="PS50059">
    <property type="entry name" value="FKBP_PPIASE"/>
    <property type="match status" value="1"/>
</dbReference>
<accession>B1J012</accession>
<keyword id="KW-0131">Cell cycle</keyword>
<keyword id="KW-0132">Cell division</keyword>
<keyword id="KW-0143">Chaperone</keyword>
<keyword id="KW-0963">Cytoplasm</keyword>
<keyword id="KW-0413">Isomerase</keyword>
<keyword id="KW-0697">Rotamase</keyword>
<comment type="function">
    <text evidence="1">Involved in protein export. Acts as a chaperone by maintaining the newly synthesized protein in an open conformation. Functions as a peptidyl-prolyl cis-trans isomerase.</text>
</comment>
<comment type="catalytic activity">
    <reaction evidence="1">
        <text>[protein]-peptidylproline (omega=180) = [protein]-peptidylproline (omega=0)</text>
        <dbReference type="Rhea" id="RHEA:16237"/>
        <dbReference type="Rhea" id="RHEA-COMP:10747"/>
        <dbReference type="Rhea" id="RHEA-COMP:10748"/>
        <dbReference type="ChEBI" id="CHEBI:83833"/>
        <dbReference type="ChEBI" id="CHEBI:83834"/>
        <dbReference type="EC" id="5.2.1.8"/>
    </reaction>
</comment>
<comment type="subunit">
    <text evidence="1">Homodimer and monomer. In vivo most of the ribosomes are in complex with monomeric TF. Uncomplexed TF, however, is in a monomer-dimer equilibrium with approximately two thirds of TF existing in a dimeric state.</text>
</comment>
<comment type="subcellular location">
    <subcellularLocation>
        <location>Cytoplasm</location>
    </subcellularLocation>
    <text evidence="1">About half TF is bound to the ribosome near the polypeptide exit tunnel while the other half is free in the cytoplasm.</text>
</comment>
<comment type="domain">
    <text evidence="1">Consists of 3 domains; the N-terminus binds the ribosome, the middle domain has PPIase activity, while the C-terminus has intrinsic chaperone activity on its own.</text>
</comment>
<comment type="similarity">
    <text evidence="1">Belongs to the FKBP-type PPIase family. Tig subfamily.</text>
</comment>
<feature type="chain" id="PRO_1000079039" description="Trigger factor">
    <location>
        <begin position="1"/>
        <end position="432"/>
    </location>
</feature>
<feature type="domain" description="PPIase FKBP-type" evidence="1">
    <location>
        <begin position="161"/>
        <end position="246"/>
    </location>
</feature>
<gene>
    <name evidence="1" type="primary">tig</name>
    <name type="ordered locus">EcolC_3196</name>
</gene>